<feature type="chain" id="PRO_1000062813" description="Undecaprenyl-diphosphatase">
    <location>
        <begin position="1"/>
        <end position="266"/>
    </location>
</feature>
<feature type="transmembrane region" description="Helical" evidence="1">
    <location>
        <begin position="1"/>
        <end position="21"/>
    </location>
</feature>
<feature type="transmembrane region" description="Helical" evidence="1">
    <location>
        <begin position="39"/>
        <end position="59"/>
    </location>
</feature>
<feature type="transmembrane region" description="Helical" evidence="1">
    <location>
        <begin position="87"/>
        <end position="107"/>
    </location>
</feature>
<feature type="transmembrane region" description="Helical" evidence="1">
    <location>
        <begin position="114"/>
        <end position="134"/>
    </location>
</feature>
<feature type="transmembrane region" description="Helical" evidence="1">
    <location>
        <begin position="149"/>
        <end position="169"/>
    </location>
</feature>
<feature type="transmembrane region" description="Helical" evidence="1">
    <location>
        <begin position="183"/>
        <end position="203"/>
    </location>
</feature>
<feature type="transmembrane region" description="Helical" evidence="1">
    <location>
        <begin position="218"/>
        <end position="238"/>
    </location>
</feature>
<feature type="transmembrane region" description="Helical" evidence="1">
    <location>
        <begin position="246"/>
        <end position="266"/>
    </location>
</feature>
<proteinExistence type="inferred from homology"/>
<evidence type="ECO:0000255" key="1">
    <source>
        <dbReference type="HAMAP-Rule" id="MF_01006"/>
    </source>
</evidence>
<name>UPPP_SHEB8</name>
<dbReference type="EC" id="3.6.1.27" evidence="1"/>
<dbReference type="EMBL" id="CP000753">
    <property type="protein sequence ID" value="ABS07347.1"/>
    <property type="molecule type" value="Genomic_DNA"/>
</dbReference>
<dbReference type="RefSeq" id="WP_006080730.1">
    <property type="nucleotide sequence ID" value="NC_009665.1"/>
</dbReference>
<dbReference type="SMR" id="A6WKK8"/>
<dbReference type="KEGG" id="sbm:Shew185_1196"/>
<dbReference type="HOGENOM" id="CLU_060296_1_0_6"/>
<dbReference type="GO" id="GO:0005886">
    <property type="term" value="C:plasma membrane"/>
    <property type="evidence" value="ECO:0007669"/>
    <property type="project" value="UniProtKB-SubCell"/>
</dbReference>
<dbReference type="GO" id="GO:0050380">
    <property type="term" value="F:undecaprenyl-diphosphatase activity"/>
    <property type="evidence" value="ECO:0007669"/>
    <property type="project" value="UniProtKB-UniRule"/>
</dbReference>
<dbReference type="GO" id="GO:0071555">
    <property type="term" value="P:cell wall organization"/>
    <property type="evidence" value="ECO:0007669"/>
    <property type="project" value="UniProtKB-KW"/>
</dbReference>
<dbReference type="GO" id="GO:0009252">
    <property type="term" value="P:peptidoglycan biosynthetic process"/>
    <property type="evidence" value="ECO:0007669"/>
    <property type="project" value="UniProtKB-KW"/>
</dbReference>
<dbReference type="GO" id="GO:0008360">
    <property type="term" value="P:regulation of cell shape"/>
    <property type="evidence" value="ECO:0007669"/>
    <property type="project" value="UniProtKB-KW"/>
</dbReference>
<dbReference type="GO" id="GO:0046677">
    <property type="term" value="P:response to antibiotic"/>
    <property type="evidence" value="ECO:0007669"/>
    <property type="project" value="UniProtKB-UniRule"/>
</dbReference>
<dbReference type="HAMAP" id="MF_01006">
    <property type="entry name" value="Undec_diphosphatase"/>
    <property type="match status" value="1"/>
</dbReference>
<dbReference type="InterPro" id="IPR003824">
    <property type="entry name" value="UppP"/>
</dbReference>
<dbReference type="NCBIfam" id="NF001393">
    <property type="entry name" value="PRK00281.2-4"/>
    <property type="match status" value="1"/>
</dbReference>
<dbReference type="NCBIfam" id="TIGR00753">
    <property type="entry name" value="undec_PP_bacA"/>
    <property type="match status" value="1"/>
</dbReference>
<dbReference type="PANTHER" id="PTHR30622">
    <property type="entry name" value="UNDECAPRENYL-DIPHOSPHATASE"/>
    <property type="match status" value="1"/>
</dbReference>
<dbReference type="PANTHER" id="PTHR30622:SF4">
    <property type="entry name" value="UNDECAPRENYL-DIPHOSPHATASE"/>
    <property type="match status" value="1"/>
</dbReference>
<dbReference type="Pfam" id="PF02673">
    <property type="entry name" value="BacA"/>
    <property type="match status" value="1"/>
</dbReference>
<sequence>MDTFQVIILALIQGLTEFLPISSSAHLILPAQLLGWEDQGLSFDVAVNTGSLFAVVIYFRHELWTMFNAWIASIFRGQQSEDSKLAWWIILATLPAVFFGFLAKDFIATHLRNAEVIAVTTVVFGLLLWWADKMSRRDLTVYQTGWRKALLIGFAQALALIPGTSRSGATMTAALMLGLSRDAAARFSFLMSVPVSLGAAILVGKDLAKSELPIDYQALILGTLISFVAAYACIHYFLKIISRMGMTPFVIYRLALGAVLCGFIFF</sequence>
<protein>
    <recommendedName>
        <fullName evidence="1">Undecaprenyl-diphosphatase</fullName>
        <ecNumber evidence="1">3.6.1.27</ecNumber>
    </recommendedName>
    <alternativeName>
        <fullName evidence="1">Bacitracin resistance protein</fullName>
    </alternativeName>
    <alternativeName>
        <fullName evidence="1">Undecaprenyl pyrophosphate phosphatase</fullName>
    </alternativeName>
</protein>
<reference key="1">
    <citation type="submission" date="2007-07" db="EMBL/GenBank/DDBJ databases">
        <title>Complete sequence of chromosome of Shewanella baltica OS185.</title>
        <authorList>
            <consortium name="US DOE Joint Genome Institute"/>
            <person name="Copeland A."/>
            <person name="Lucas S."/>
            <person name="Lapidus A."/>
            <person name="Barry K."/>
            <person name="Glavina del Rio T."/>
            <person name="Dalin E."/>
            <person name="Tice H."/>
            <person name="Pitluck S."/>
            <person name="Sims D."/>
            <person name="Brettin T."/>
            <person name="Bruce D."/>
            <person name="Detter J.C."/>
            <person name="Han C."/>
            <person name="Schmutz J."/>
            <person name="Larimer F."/>
            <person name="Land M."/>
            <person name="Hauser L."/>
            <person name="Kyrpides N."/>
            <person name="Mikhailova N."/>
            <person name="Brettar I."/>
            <person name="Rodrigues J."/>
            <person name="Konstantinidis K."/>
            <person name="Tiedje J."/>
            <person name="Richardson P."/>
        </authorList>
    </citation>
    <scope>NUCLEOTIDE SEQUENCE [LARGE SCALE GENOMIC DNA]</scope>
    <source>
        <strain>OS185</strain>
    </source>
</reference>
<gene>
    <name evidence="1" type="primary">uppP</name>
    <name type="ordered locus">Shew185_1196</name>
</gene>
<organism>
    <name type="scientific">Shewanella baltica (strain OS185)</name>
    <dbReference type="NCBI Taxonomy" id="402882"/>
    <lineage>
        <taxon>Bacteria</taxon>
        <taxon>Pseudomonadati</taxon>
        <taxon>Pseudomonadota</taxon>
        <taxon>Gammaproteobacteria</taxon>
        <taxon>Alteromonadales</taxon>
        <taxon>Shewanellaceae</taxon>
        <taxon>Shewanella</taxon>
    </lineage>
</organism>
<comment type="function">
    <text evidence="1">Catalyzes the dephosphorylation of undecaprenyl diphosphate (UPP). Confers resistance to bacitracin.</text>
</comment>
<comment type="catalytic activity">
    <reaction evidence="1">
        <text>di-trans,octa-cis-undecaprenyl diphosphate + H2O = di-trans,octa-cis-undecaprenyl phosphate + phosphate + H(+)</text>
        <dbReference type="Rhea" id="RHEA:28094"/>
        <dbReference type="ChEBI" id="CHEBI:15377"/>
        <dbReference type="ChEBI" id="CHEBI:15378"/>
        <dbReference type="ChEBI" id="CHEBI:43474"/>
        <dbReference type="ChEBI" id="CHEBI:58405"/>
        <dbReference type="ChEBI" id="CHEBI:60392"/>
        <dbReference type="EC" id="3.6.1.27"/>
    </reaction>
</comment>
<comment type="subcellular location">
    <subcellularLocation>
        <location evidence="1">Cell inner membrane</location>
        <topology evidence="1">Multi-pass membrane protein</topology>
    </subcellularLocation>
</comment>
<comment type="miscellaneous">
    <text>Bacitracin is thought to be involved in the inhibition of peptidoglycan synthesis by sequestering undecaprenyl diphosphate, thereby reducing the pool of lipid carrier available.</text>
</comment>
<comment type="similarity">
    <text evidence="1">Belongs to the UppP family.</text>
</comment>
<keyword id="KW-0046">Antibiotic resistance</keyword>
<keyword id="KW-0997">Cell inner membrane</keyword>
<keyword id="KW-1003">Cell membrane</keyword>
<keyword id="KW-0133">Cell shape</keyword>
<keyword id="KW-0961">Cell wall biogenesis/degradation</keyword>
<keyword id="KW-0378">Hydrolase</keyword>
<keyword id="KW-0472">Membrane</keyword>
<keyword id="KW-0573">Peptidoglycan synthesis</keyword>
<keyword id="KW-0812">Transmembrane</keyword>
<keyword id="KW-1133">Transmembrane helix</keyword>
<accession>A6WKK8</accession>